<evidence type="ECO:0000255" key="1">
    <source>
        <dbReference type="HAMAP-Rule" id="MF_01609"/>
    </source>
</evidence>
<protein>
    <recommendedName>
        <fullName evidence="1">Putative glutamate--cysteine ligase 2</fullName>
        <ecNumber evidence="1">6.3.2.2</ecNumber>
    </recommendedName>
    <alternativeName>
        <fullName evidence="1">Gamma-glutamylcysteine synthetase 2</fullName>
        <shortName evidence="1">GCS 2</shortName>
        <shortName evidence="1">Gamma-GCS 2</shortName>
    </alternativeName>
</protein>
<feature type="chain" id="PRO_1000148233" description="Putative glutamate--cysteine ligase 2">
    <location>
        <begin position="1"/>
        <end position="372"/>
    </location>
</feature>
<reference key="1">
    <citation type="journal article" date="2009" name="BMC Genomics">
        <title>Pseudogene accumulation in the evolutionary histories of Salmonella enterica serovars Paratyphi A and Typhi.</title>
        <authorList>
            <person name="Holt K.E."/>
            <person name="Thomson N.R."/>
            <person name="Wain J."/>
            <person name="Langridge G.C."/>
            <person name="Hasan R."/>
            <person name="Bhutta Z.A."/>
            <person name="Quail M.A."/>
            <person name="Norbertczak H."/>
            <person name="Walker D."/>
            <person name="Simmonds M."/>
            <person name="White B."/>
            <person name="Bason N."/>
            <person name="Mungall K."/>
            <person name="Dougan G."/>
            <person name="Parkhill J."/>
        </authorList>
    </citation>
    <scope>NUCLEOTIDE SEQUENCE [LARGE SCALE GENOMIC DNA]</scope>
    <source>
        <strain>AKU_12601</strain>
    </source>
</reference>
<keyword id="KW-0067">ATP-binding</keyword>
<keyword id="KW-0436">Ligase</keyword>
<keyword id="KW-0547">Nucleotide-binding</keyword>
<name>GCS2_SALPK</name>
<gene>
    <name type="primary">ybdK</name>
    <name type="ordered locus">SSPA2001</name>
</gene>
<sequence length="372" mass="41713">MALNDFHVSEPYTLGIELEMQVINPPGYDLSQDSSTLIDAVKPQLTAGEIKHDITESMLEMATGVCRDIDQAAAQLSAMQHVILQAASEHHLGICGGGTHPFQKWQRQEVCDNERYQRTLENFGYLIQQATVFGQHVHVGCANGDDAIYLLHGLSHFVPHFIALSAASPYMQGADTRFACARLNIFSAFPDNGPMPWVSNWQEFTGLFRRLSYTTMIDSIKDLHWDIRPSPAFGTVEVRVMDTPLTLDHAINMAGLIQATAHWLLTERPFKPQEQDYLLYKFNRFQACRYGLESVLIDVYTGDRRRLADDTLRLLDNVTLSARKLGADSAIDALRLQVKKGGNEAQYMREFIADGGSLIGLVQKHCEIWAGQ</sequence>
<organism>
    <name type="scientific">Salmonella paratyphi A (strain AKU_12601)</name>
    <dbReference type="NCBI Taxonomy" id="554290"/>
    <lineage>
        <taxon>Bacteria</taxon>
        <taxon>Pseudomonadati</taxon>
        <taxon>Pseudomonadota</taxon>
        <taxon>Gammaproteobacteria</taxon>
        <taxon>Enterobacterales</taxon>
        <taxon>Enterobacteriaceae</taxon>
        <taxon>Salmonella</taxon>
    </lineage>
</organism>
<accession>B5BCW8</accession>
<comment type="function">
    <text evidence="1">ATP-dependent carboxylate-amine ligase which exhibits weak glutamate--cysteine ligase activity.</text>
</comment>
<comment type="catalytic activity">
    <reaction evidence="1">
        <text>L-cysteine + L-glutamate + ATP = gamma-L-glutamyl-L-cysteine + ADP + phosphate + H(+)</text>
        <dbReference type="Rhea" id="RHEA:13285"/>
        <dbReference type="ChEBI" id="CHEBI:15378"/>
        <dbReference type="ChEBI" id="CHEBI:29985"/>
        <dbReference type="ChEBI" id="CHEBI:30616"/>
        <dbReference type="ChEBI" id="CHEBI:35235"/>
        <dbReference type="ChEBI" id="CHEBI:43474"/>
        <dbReference type="ChEBI" id="CHEBI:58173"/>
        <dbReference type="ChEBI" id="CHEBI:456216"/>
        <dbReference type="EC" id="6.3.2.2"/>
    </reaction>
</comment>
<comment type="subunit">
    <text evidence="1">Homodimer.</text>
</comment>
<comment type="similarity">
    <text evidence="1">Belongs to the glutamate--cysteine ligase type 2 family. YbdK subfamily.</text>
</comment>
<proteinExistence type="inferred from homology"/>
<dbReference type="EC" id="6.3.2.2" evidence="1"/>
<dbReference type="EMBL" id="FM200053">
    <property type="protein sequence ID" value="CAR60204.1"/>
    <property type="molecule type" value="Genomic_DNA"/>
</dbReference>
<dbReference type="RefSeq" id="WP_001196906.1">
    <property type="nucleotide sequence ID" value="NC_011147.1"/>
</dbReference>
<dbReference type="SMR" id="B5BCW8"/>
<dbReference type="KEGG" id="sek:SSPA2001"/>
<dbReference type="HOGENOM" id="CLU_044848_1_1_6"/>
<dbReference type="Proteomes" id="UP000001869">
    <property type="component" value="Chromosome"/>
</dbReference>
<dbReference type="GO" id="GO:0005524">
    <property type="term" value="F:ATP binding"/>
    <property type="evidence" value="ECO:0007669"/>
    <property type="project" value="UniProtKB-KW"/>
</dbReference>
<dbReference type="GO" id="GO:0004357">
    <property type="term" value="F:glutamate-cysteine ligase activity"/>
    <property type="evidence" value="ECO:0007669"/>
    <property type="project" value="UniProtKB-EC"/>
</dbReference>
<dbReference type="GO" id="GO:0042398">
    <property type="term" value="P:modified amino acid biosynthetic process"/>
    <property type="evidence" value="ECO:0007669"/>
    <property type="project" value="InterPro"/>
</dbReference>
<dbReference type="FunFam" id="3.30.590.20:FF:000002">
    <property type="entry name" value="Putative glutamate--cysteine ligase 2"/>
    <property type="match status" value="1"/>
</dbReference>
<dbReference type="Gene3D" id="3.30.590.20">
    <property type="match status" value="1"/>
</dbReference>
<dbReference type="HAMAP" id="MF_01609">
    <property type="entry name" value="Glu_cys_ligase_2"/>
    <property type="match status" value="1"/>
</dbReference>
<dbReference type="InterPro" id="IPR050141">
    <property type="entry name" value="GCL_type2/YbdK_subfam"/>
</dbReference>
<dbReference type="InterPro" id="IPR006336">
    <property type="entry name" value="GCS2"/>
</dbReference>
<dbReference type="InterPro" id="IPR014746">
    <property type="entry name" value="Gln_synth/guanido_kin_cat_dom"/>
</dbReference>
<dbReference type="InterPro" id="IPR011793">
    <property type="entry name" value="YbdK"/>
</dbReference>
<dbReference type="NCBIfam" id="TIGR02050">
    <property type="entry name" value="gshA_cyan_rel"/>
    <property type="match status" value="1"/>
</dbReference>
<dbReference type="NCBIfam" id="NF010040">
    <property type="entry name" value="PRK13516.1"/>
    <property type="match status" value="1"/>
</dbReference>
<dbReference type="PANTHER" id="PTHR36510">
    <property type="entry name" value="GLUTAMATE--CYSTEINE LIGASE 2-RELATED"/>
    <property type="match status" value="1"/>
</dbReference>
<dbReference type="PANTHER" id="PTHR36510:SF1">
    <property type="entry name" value="GLUTAMATE--CYSTEINE LIGASE 2-RELATED"/>
    <property type="match status" value="1"/>
</dbReference>
<dbReference type="Pfam" id="PF04107">
    <property type="entry name" value="GCS2"/>
    <property type="match status" value="1"/>
</dbReference>
<dbReference type="SUPFAM" id="SSF55931">
    <property type="entry name" value="Glutamine synthetase/guanido kinase"/>
    <property type="match status" value="1"/>
</dbReference>